<gene>
    <name evidence="1" type="primary">atpC</name>
    <name type="ordered locus">SGR_2162</name>
</gene>
<comment type="function">
    <text evidence="1">Produces ATP from ADP in the presence of a proton gradient across the membrane.</text>
</comment>
<comment type="subunit">
    <text evidence="1">F-type ATPases have 2 components, CF(1) - the catalytic core - and CF(0) - the membrane proton channel. CF(1) has five subunits: alpha(3), beta(3), gamma(1), delta(1), epsilon(1). CF(0) has three main subunits: a, b and c.</text>
</comment>
<comment type="subcellular location">
    <subcellularLocation>
        <location evidence="1">Cell membrane</location>
        <topology evidence="1">Peripheral membrane protein</topology>
    </subcellularLocation>
</comment>
<comment type="similarity">
    <text evidence="1">Belongs to the ATPase epsilon chain family.</text>
</comment>
<protein>
    <recommendedName>
        <fullName evidence="1">ATP synthase epsilon chain</fullName>
    </recommendedName>
    <alternativeName>
        <fullName evidence="1">ATP synthase F1 sector epsilon subunit</fullName>
    </alternativeName>
    <alternativeName>
        <fullName evidence="1">F-ATPase epsilon subunit</fullName>
    </alternativeName>
</protein>
<feature type="chain" id="PRO_1000127894" description="ATP synthase epsilon chain">
    <location>
        <begin position="1"/>
        <end position="124"/>
    </location>
</feature>
<name>ATPE_STRGG</name>
<reference key="1">
    <citation type="journal article" date="2008" name="J. Bacteriol.">
        <title>Genome sequence of the streptomycin-producing microorganism Streptomyces griseus IFO 13350.</title>
        <authorList>
            <person name="Ohnishi Y."/>
            <person name="Ishikawa J."/>
            <person name="Hara H."/>
            <person name="Suzuki H."/>
            <person name="Ikenoya M."/>
            <person name="Ikeda H."/>
            <person name="Yamashita A."/>
            <person name="Hattori M."/>
            <person name="Horinouchi S."/>
        </authorList>
    </citation>
    <scope>NUCLEOTIDE SEQUENCE [LARGE SCALE GENOMIC DNA]</scope>
    <source>
        <strain>JCM 4626 / CBS 651.72 / NBRC 13350 / KCC S-0626 / ISP 5235</strain>
    </source>
</reference>
<organism>
    <name type="scientific">Streptomyces griseus subsp. griseus (strain JCM 4626 / CBS 651.72 / NBRC 13350 / KCC S-0626 / ISP 5235)</name>
    <dbReference type="NCBI Taxonomy" id="455632"/>
    <lineage>
        <taxon>Bacteria</taxon>
        <taxon>Bacillati</taxon>
        <taxon>Actinomycetota</taxon>
        <taxon>Actinomycetes</taxon>
        <taxon>Kitasatosporales</taxon>
        <taxon>Streptomycetaceae</taxon>
        <taxon>Streptomyces</taxon>
    </lineage>
</organism>
<accession>B1W0A2</accession>
<dbReference type="EMBL" id="AP009493">
    <property type="protein sequence ID" value="BAG18991.1"/>
    <property type="molecule type" value="Genomic_DNA"/>
</dbReference>
<dbReference type="RefSeq" id="WP_003966248.1">
    <property type="nucleotide sequence ID" value="NC_010572.1"/>
</dbReference>
<dbReference type="SMR" id="B1W0A2"/>
<dbReference type="KEGG" id="sgr:SGR_2162"/>
<dbReference type="eggNOG" id="COG0355">
    <property type="taxonomic scope" value="Bacteria"/>
</dbReference>
<dbReference type="HOGENOM" id="CLU_084338_1_3_11"/>
<dbReference type="Proteomes" id="UP000001685">
    <property type="component" value="Chromosome"/>
</dbReference>
<dbReference type="GO" id="GO:0005886">
    <property type="term" value="C:plasma membrane"/>
    <property type="evidence" value="ECO:0007669"/>
    <property type="project" value="UniProtKB-SubCell"/>
</dbReference>
<dbReference type="GO" id="GO:0045259">
    <property type="term" value="C:proton-transporting ATP synthase complex"/>
    <property type="evidence" value="ECO:0007669"/>
    <property type="project" value="UniProtKB-KW"/>
</dbReference>
<dbReference type="GO" id="GO:0005524">
    <property type="term" value="F:ATP binding"/>
    <property type="evidence" value="ECO:0007669"/>
    <property type="project" value="UniProtKB-UniRule"/>
</dbReference>
<dbReference type="GO" id="GO:0046933">
    <property type="term" value="F:proton-transporting ATP synthase activity, rotational mechanism"/>
    <property type="evidence" value="ECO:0007669"/>
    <property type="project" value="UniProtKB-UniRule"/>
</dbReference>
<dbReference type="CDD" id="cd12152">
    <property type="entry name" value="F1-ATPase_delta"/>
    <property type="match status" value="1"/>
</dbReference>
<dbReference type="Gene3D" id="2.60.15.10">
    <property type="entry name" value="F0F1 ATP synthase delta/epsilon subunit, N-terminal"/>
    <property type="match status" value="1"/>
</dbReference>
<dbReference type="HAMAP" id="MF_00530">
    <property type="entry name" value="ATP_synth_epsil_bac"/>
    <property type="match status" value="1"/>
</dbReference>
<dbReference type="InterPro" id="IPR001469">
    <property type="entry name" value="ATP_synth_F1_dsu/esu"/>
</dbReference>
<dbReference type="InterPro" id="IPR020546">
    <property type="entry name" value="ATP_synth_F1_dsu/esu_N"/>
</dbReference>
<dbReference type="InterPro" id="IPR036771">
    <property type="entry name" value="ATPsynth_dsu/esu_N"/>
</dbReference>
<dbReference type="NCBIfam" id="TIGR01216">
    <property type="entry name" value="ATP_synt_epsi"/>
    <property type="match status" value="1"/>
</dbReference>
<dbReference type="NCBIfam" id="NF009977">
    <property type="entry name" value="PRK13442.1"/>
    <property type="match status" value="1"/>
</dbReference>
<dbReference type="PANTHER" id="PTHR13822">
    <property type="entry name" value="ATP SYNTHASE DELTA/EPSILON CHAIN"/>
    <property type="match status" value="1"/>
</dbReference>
<dbReference type="PANTHER" id="PTHR13822:SF10">
    <property type="entry name" value="ATP SYNTHASE EPSILON CHAIN, CHLOROPLASTIC"/>
    <property type="match status" value="1"/>
</dbReference>
<dbReference type="Pfam" id="PF02823">
    <property type="entry name" value="ATP-synt_DE_N"/>
    <property type="match status" value="1"/>
</dbReference>
<dbReference type="SUPFAM" id="SSF51344">
    <property type="entry name" value="Epsilon subunit of F1F0-ATP synthase N-terminal domain"/>
    <property type="match status" value="1"/>
</dbReference>
<evidence type="ECO:0000255" key="1">
    <source>
        <dbReference type="HAMAP-Rule" id="MF_00530"/>
    </source>
</evidence>
<proteinExistence type="inferred from homology"/>
<keyword id="KW-0066">ATP synthesis</keyword>
<keyword id="KW-1003">Cell membrane</keyword>
<keyword id="KW-0139">CF(1)</keyword>
<keyword id="KW-0375">Hydrogen ion transport</keyword>
<keyword id="KW-0406">Ion transport</keyword>
<keyword id="KW-0472">Membrane</keyword>
<keyword id="KW-0813">Transport</keyword>
<sequence>MAAELHVELVAADRSVWSGEATLVVARTTSGDIGVMPGHQPLLGVLESGPVTIRTSEGGTVIAAVHGGFISFADDKLSLLAEIAELADEIDVERAERALELAKSDADAAAQRRADVRLRAVAVR</sequence>